<reference key="1">
    <citation type="journal article" date="2008" name="DNA Res.">
        <title>Comparative genome analysis of Lactobacillus reuteri and Lactobacillus fermentum reveal a genomic island for reuterin and cobalamin production.</title>
        <authorList>
            <person name="Morita H."/>
            <person name="Toh H."/>
            <person name="Fukuda S."/>
            <person name="Horikawa H."/>
            <person name="Oshima K."/>
            <person name="Suzuki T."/>
            <person name="Murakami M."/>
            <person name="Hisamatsu S."/>
            <person name="Kato Y."/>
            <person name="Takizawa T."/>
            <person name="Fukuoka H."/>
            <person name="Yoshimura T."/>
            <person name="Itoh K."/>
            <person name="O'Sullivan D.J."/>
            <person name="McKay L.L."/>
            <person name="Ohno H."/>
            <person name="Kikuchi J."/>
            <person name="Masaoka T."/>
            <person name="Hattori M."/>
        </authorList>
    </citation>
    <scope>NUCLEOTIDE SEQUENCE [LARGE SCALE GENOMIC DNA]</scope>
    <source>
        <strain>JCM 1112</strain>
    </source>
</reference>
<organism>
    <name type="scientific">Limosilactobacillus reuteri subsp. reuteri (strain JCM 1112)</name>
    <name type="common">Lactobacillus reuteri</name>
    <dbReference type="NCBI Taxonomy" id="557433"/>
    <lineage>
        <taxon>Bacteria</taxon>
        <taxon>Bacillati</taxon>
        <taxon>Bacillota</taxon>
        <taxon>Bacilli</taxon>
        <taxon>Lactobacillales</taxon>
        <taxon>Lactobacillaceae</taxon>
        <taxon>Limosilactobacillus</taxon>
    </lineage>
</organism>
<feature type="chain" id="PRO_1000134169" description="ATP synthase gamma chain">
    <location>
        <begin position="1"/>
        <end position="314"/>
    </location>
</feature>
<gene>
    <name evidence="1" type="primary">atpG</name>
    <name type="ordered locus">LAR_0456</name>
</gene>
<name>ATPG_LIMRJ</name>
<sequence length="314" mass="34796">MPASLAAVKHKIDSTKSTRQITSAMQMVSTAKLNQIQHHTQTYEVYAEKVKQMLSDLVKSHSATSAASQDDVYAALFKKRAVKKTGVLVITSDRGLVGSYNSNIIKQTLDMMAKHNLDKDNTVFLTVGKTGTEFFKKRGMNVVYEYSGVSDVPTYREVHSIVKTAVQMYSDQVFDEMYMVYSHYVNRITSNVIVHDVLPITEKSLLDDENEAQENTELNNSDVSTAHVSAEYEFEPSDTEIISALVAQYAESLIYGAILDAKTSEHSSSANAMRSATDNADDIISTLELQYNRARQAAITTEITEITGGMTAQE</sequence>
<dbReference type="EMBL" id="AP007281">
    <property type="protein sequence ID" value="BAG24972.1"/>
    <property type="molecule type" value="Genomic_DNA"/>
</dbReference>
<dbReference type="RefSeq" id="WP_003666570.1">
    <property type="nucleotide sequence ID" value="NC_010609.1"/>
</dbReference>
<dbReference type="SMR" id="B2G690"/>
<dbReference type="KEGG" id="lrf:LAR_0456"/>
<dbReference type="HOGENOM" id="CLU_050669_0_1_9"/>
<dbReference type="GO" id="GO:0005886">
    <property type="term" value="C:plasma membrane"/>
    <property type="evidence" value="ECO:0007669"/>
    <property type="project" value="UniProtKB-SubCell"/>
</dbReference>
<dbReference type="GO" id="GO:0045259">
    <property type="term" value="C:proton-transporting ATP synthase complex"/>
    <property type="evidence" value="ECO:0007669"/>
    <property type="project" value="UniProtKB-KW"/>
</dbReference>
<dbReference type="GO" id="GO:0005524">
    <property type="term" value="F:ATP binding"/>
    <property type="evidence" value="ECO:0007669"/>
    <property type="project" value="UniProtKB-UniRule"/>
</dbReference>
<dbReference type="GO" id="GO:0046933">
    <property type="term" value="F:proton-transporting ATP synthase activity, rotational mechanism"/>
    <property type="evidence" value="ECO:0007669"/>
    <property type="project" value="UniProtKB-UniRule"/>
</dbReference>
<dbReference type="GO" id="GO:0042777">
    <property type="term" value="P:proton motive force-driven plasma membrane ATP synthesis"/>
    <property type="evidence" value="ECO:0007669"/>
    <property type="project" value="UniProtKB-UniRule"/>
</dbReference>
<dbReference type="CDD" id="cd12151">
    <property type="entry name" value="F1-ATPase_gamma"/>
    <property type="match status" value="1"/>
</dbReference>
<dbReference type="Gene3D" id="3.40.1380.10">
    <property type="match status" value="1"/>
</dbReference>
<dbReference type="Gene3D" id="1.10.287.80">
    <property type="entry name" value="ATP synthase, gamma subunit, helix hairpin domain"/>
    <property type="match status" value="2"/>
</dbReference>
<dbReference type="HAMAP" id="MF_00815">
    <property type="entry name" value="ATP_synth_gamma_bact"/>
    <property type="match status" value="1"/>
</dbReference>
<dbReference type="InterPro" id="IPR035968">
    <property type="entry name" value="ATP_synth_F1_ATPase_gsu"/>
</dbReference>
<dbReference type="InterPro" id="IPR000131">
    <property type="entry name" value="ATP_synth_F1_gsu"/>
</dbReference>
<dbReference type="NCBIfam" id="TIGR01146">
    <property type="entry name" value="ATPsyn_F1gamma"/>
    <property type="match status" value="1"/>
</dbReference>
<dbReference type="NCBIfam" id="NF004147">
    <property type="entry name" value="PRK05621.2-1"/>
    <property type="match status" value="1"/>
</dbReference>
<dbReference type="PANTHER" id="PTHR11693">
    <property type="entry name" value="ATP SYNTHASE GAMMA CHAIN"/>
    <property type="match status" value="1"/>
</dbReference>
<dbReference type="PANTHER" id="PTHR11693:SF22">
    <property type="entry name" value="ATP SYNTHASE SUBUNIT GAMMA, MITOCHONDRIAL"/>
    <property type="match status" value="1"/>
</dbReference>
<dbReference type="Pfam" id="PF00231">
    <property type="entry name" value="ATP-synt"/>
    <property type="match status" value="1"/>
</dbReference>
<dbReference type="PRINTS" id="PR00126">
    <property type="entry name" value="ATPASEGAMMA"/>
</dbReference>
<dbReference type="SUPFAM" id="SSF52943">
    <property type="entry name" value="ATP synthase (F1-ATPase), gamma subunit"/>
    <property type="match status" value="1"/>
</dbReference>
<comment type="function">
    <text evidence="1">Produces ATP from ADP in the presence of a proton gradient across the membrane. The gamma chain is believed to be important in regulating ATPase activity and the flow of protons through the CF(0) complex.</text>
</comment>
<comment type="subunit">
    <text evidence="1">F-type ATPases have 2 components, CF(1) - the catalytic core - and CF(0) - the membrane proton channel. CF(1) has five subunits: alpha(3), beta(3), gamma(1), delta(1), epsilon(1). CF(0) has three main subunits: a, b and c.</text>
</comment>
<comment type="subcellular location">
    <subcellularLocation>
        <location evidence="1">Cell membrane</location>
        <topology evidence="1">Peripheral membrane protein</topology>
    </subcellularLocation>
</comment>
<comment type="similarity">
    <text evidence="1">Belongs to the ATPase gamma chain family.</text>
</comment>
<evidence type="ECO:0000255" key="1">
    <source>
        <dbReference type="HAMAP-Rule" id="MF_00815"/>
    </source>
</evidence>
<keyword id="KW-0066">ATP synthesis</keyword>
<keyword id="KW-1003">Cell membrane</keyword>
<keyword id="KW-0139">CF(1)</keyword>
<keyword id="KW-0375">Hydrogen ion transport</keyword>
<keyword id="KW-0406">Ion transport</keyword>
<keyword id="KW-0472">Membrane</keyword>
<keyword id="KW-0813">Transport</keyword>
<proteinExistence type="inferred from homology"/>
<accession>B2G690</accession>
<protein>
    <recommendedName>
        <fullName evidence="1">ATP synthase gamma chain</fullName>
    </recommendedName>
    <alternativeName>
        <fullName evidence="1">ATP synthase F1 sector gamma subunit</fullName>
    </alternativeName>
    <alternativeName>
        <fullName evidence="1">F-ATPase gamma subunit</fullName>
    </alternativeName>
</protein>